<organism>
    <name type="scientific">Rattus norvegicus</name>
    <name type="common">Rat</name>
    <dbReference type="NCBI Taxonomy" id="10116"/>
    <lineage>
        <taxon>Eukaryota</taxon>
        <taxon>Metazoa</taxon>
        <taxon>Chordata</taxon>
        <taxon>Craniata</taxon>
        <taxon>Vertebrata</taxon>
        <taxon>Euteleostomi</taxon>
        <taxon>Mammalia</taxon>
        <taxon>Eutheria</taxon>
        <taxon>Euarchontoglires</taxon>
        <taxon>Glires</taxon>
        <taxon>Rodentia</taxon>
        <taxon>Myomorpha</taxon>
        <taxon>Muroidea</taxon>
        <taxon>Muridae</taxon>
        <taxon>Murinae</taxon>
        <taxon>Rattus</taxon>
    </lineage>
</organism>
<comment type="function">
    <text evidence="2">Catalyzes the ATP-dependent transport of phospholipids such as phosphatidylcholine and phosphoglycerol from the cytoplasm into the lumen side of lamellar bodies, in turn participates in the lamellar bodies biogenesis and homeostasis of pulmonary surfactant. Transports preferentially phosphatidylcholine containing short acyl chains. In addition plays a role as an efflux transporter of miltefosine across macrophage membranes and free cholesterol (FC) through intralumenal vesicles by removing FC from the cell as a component of surfactant and protects cells from free cholesterol toxicity.</text>
</comment>
<comment type="catalytic activity">
    <reaction evidence="2">
        <text>ATP + H2O + xenobioticSide 1 = ADP + phosphate + xenobioticSide 2.</text>
        <dbReference type="EC" id="7.6.2.2"/>
    </reaction>
</comment>
<comment type="catalytic activity">
    <reaction evidence="2">
        <text>a 1,2-diacyl-sn-glycero-3-phosphocholine(in) + ATP + H2O = a 1,2-diacyl-sn-glycero-3-phosphocholine(out) + ADP + phosphate + H(+)</text>
        <dbReference type="Rhea" id="RHEA:66272"/>
        <dbReference type="ChEBI" id="CHEBI:15377"/>
        <dbReference type="ChEBI" id="CHEBI:15378"/>
        <dbReference type="ChEBI" id="CHEBI:30616"/>
        <dbReference type="ChEBI" id="CHEBI:43474"/>
        <dbReference type="ChEBI" id="CHEBI:57643"/>
        <dbReference type="ChEBI" id="CHEBI:456216"/>
    </reaction>
    <physiologicalReaction direction="left-to-right" evidence="2">
        <dbReference type="Rhea" id="RHEA:66273"/>
    </physiologicalReaction>
</comment>
<comment type="catalytic activity">
    <reaction evidence="2">
        <text>ATP + H2O + phospholipidSide 1 = ADP + phosphate + phospholipidSide 2.</text>
        <dbReference type="EC" id="7.6.2.1"/>
    </reaction>
</comment>
<comment type="catalytic activity">
    <reaction evidence="2">
        <text>1,2-dihexadecanoyl-sn-glycero-3-phosphocholine(in) + ATP + H2O = 1,2-dihexadecanoyl-sn-glycero-3-phosphocholine(out) + ADP + phosphate + H(+)</text>
        <dbReference type="Rhea" id="RHEA:66340"/>
        <dbReference type="ChEBI" id="CHEBI:15377"/>
        <dbReference type="ChEBI" id="CHEBI:15378"/>
        <dbReference type="ChEBI" id="CHEBI:30616"/>
        <dbReference type="ChEBI" id="CHEBI:43474"/>
        <dbReference type="ChEBI" id="CHEBI:72999"/>
        <dbReference type="ChEBI" id="CHEBI:456216"/>
    </reaction>
    <physiologicalReaction direction="left-to-right" evidence="2">
        <dbReference type="Rhea" id="RHEA:66341"/>
    </physiologicalReaction>
</comment>
<comment type="catalytic activity">
    <reaction evidence="2">
        <text>cholesterol(in) + ATP + H2O = cholesterol(out) + ADP + phosphate + H(+)</text>
        <dbReference type="Rhea" id="RHEA:39051"/>
        <dbReference type="ChEBI" id="CHEBI:15377"/>
        <dbReference type="ChEBI" id="CHEBI:15378"/>
        <dbReference type="ChEBI" id="CHEBI:16113"/>
        <dbReference type="ChEBI" id="CHEBI:30616"/>
        <dbReference type="ChEBI" id="CHEBI:43474"/>
        <dbReference type="ChEBI" id="CHEBI:456216"/>
    </reaction>
    <physiologicalReaction direction="left-to-right" evidence="2">
        <dbReference type="Rhea" id="RHEA:39052"/>
    </physiologicalReaction>
</comment>
<comment type="catalytic activity">
    <reaction evidence="1">
        <text>a 1,2-diacyl-sn-glycero-3-phospho-(1'-sn-glycerol)(in) + ATP + H2O = a 1,2-diacyl-sn-glycero-3-phospho-(1'-sn-glycerol)(out) + ADP + phosphate + H(+)</text>
        <dbReference type="Rhea" id="RHEA:66344"/>
        <dbReference type="ChEBI" id="CHEBI:15377"/>
        <dbReference type="ChEBI" id="CHEBI:15378"/>
        <dbReference type="ChEBI" id="CHEBI:30616"/>
        <dbReference type="ChEBI" id="CHEBI:43474"/>
        <dbReference type="ChEBI" id="CHEBI:64716"/>
        <dbReference type="ChEBI" id="CHEBI:456216"/>
    </reaction>
    <physiologicalReaction direction="left-to-right" evidence="1">
        <dbReference type="Rhea" id="RHEA:66345"/>
    </physiologicalReaction>
</comment>
<comment type="subunit">
    <text evidence="2">Homooligomer; disulfide-linked.</text>
</comment>
<comment type="subcellular location">
    <subcellularLocation>
        <location evidence="2">Endosome</location>
        <location evidence="2">Multivesicular body membrane</location>
        <topology evidence="2">Multi-pass membrane protein</topology>
    </subcellularLocation>
    <subcellularLocation>
        <location evidence="2">Cytoplasmic vesicle membrane</location>
    </subcellularLocation>
    <subcellularLocation>
        <location evidence="2">Late endosome membrane</location>
    </subcellularLocation>
    <subcellularLocation>
        <location evidence="2">Lysosome membrane</location>
    </subcellularLocation>
    <text evidence="2">Localized in the limiting membrane of lamellar bodies in lung alveolar type II cells. Trafficks via the Golgi, sorting vesicles (SVs) and late endosome/multivesicular body network directly to the outer membrane of lamellar bodies in AT2 lung epithelial cells or to lysosomes and lysosomal-related organelles (LROs) in other cells where undergoes proteolytic cleavage and oligosaccharide processing from high mannose type to complex type. Oligomers formation takes place in a post-endoplasmic reticulum compartment.</text>
</comment>
<comment type="tissue specificity">
    <text evidence="5">Highly expressed in lung, moderately expressed in stomach, intestine, and kidney and weakly expressed in thyroid, brain, liver, spleen, heart, testis, and thymus.</text>
</comment>
<comment type="PTM">
    <text evidence="2">N-glycosylated. Localization at intracellular vesicles is accompanied by processing of oligosaccharide from high mannose type to complex type. N-linked glycosylation at Asn-124 and Asn-140 is required for stability and efficient anterograde trafficking and prevents from proteasomal degradation.</text>
</comment>
<comment type="PTM">
    <text evidence="2">Proteolytically cleaved by CTSL and to a lower extent by CTSB within multivesicular bodies (MVB) and lamellar bodies (LB) leading to a mature form of 150 kDa.</text>
</comment>
<keyword id="KW-0067">ATP-binding</keyword>
<keyword id="KW-0968">Cytoplasmic vesicle</keyword>
<keyword id="KW-1015">Disulfide bond</keyword>
<keyword id="KW-0967">Endosome</keyword>
<keyword id="KW-0325">Glycoprotein</keyword>
<keyword id="KW-0445">Lipid transport</keyword>
<keyword id="KW-0458">Lysosome</keyword>
<keyword id="KW-0472">Membrane</keyword>
<keyword id="KW-0547">Nucleotide-binding</keyword>
<keyword id="KW-1185">Reference proteome</keyword>
<keyword id="KW-0677">Repeat</keyword>
<keyword id="KW-1278">Translocase</keyword>
<keyword id="KW-0812">Transmembrane</keyword>
<keyword id="KW-1133">Transmembrane helix</keyword>
<keyword id="KW-0813">Transport</keyword>
<name>ABCA3_RAT</name>
<protein>
    <recommendedName>
        <fullName evidence="6">Phospholipid-transporting ATPase ABCA3</fullName>
        <ecNumber evidence="2">7.6.2.1</ecNumber>
    </recommendedName>
    <alternativeName>
        <fullName evidence="6">ATP-binding cassette sub-family A member 3</fullName>
    </alternativeName>
    <alternativeName>
        <fullName evidence="2">Xenobiotic-transporting ATPase ABCA3</fullName>
        <ecNumber evidence="2">7.6.2.2</ecNumber>
    </alternativeName>
    <component>
        <recommendedName>
            <fullName evidence="2">150 Kda mature form</fullName>
        </recommendedName>
    </component>
</protein>
<gene>
    <name evidence="7" type="primary">Abca3</name>
</gene>
<proteinExistence type="evidence at protein level"/>
<evidence type="ECO:0000250" key="1">
    <source>
        <dbReference type="UniProtKB" id="Q8R420"/>
    </source>
</evidence>
<evidence type="ECO:0000250" key="2">
    <source>
        <dbReference type="UniProtKB" id="Q99758"/>
    </source>
</evidence>
<evidence type="ECO:0000255" key="3"/>
<evidence type="ECO:0000255" key="4">
    <source>
        <dbReference type="PROSITE-ProRule" id="PRU00434"/>
    </source>
</evidence>
<evidence type="ECO:0000269" key="5">
    <source>
    </source>
</evidence>
<evidence type="ECO:0000305" key="6"/>
<evidence type="ECO:0000312" key="7">
    <source>
        <dbReference type="RGD" id="1307174"/>
    </source>
</evidence>
<accession>A0A0G2K1Q8</accession>
<reference key="1">
    <citation type="journal article" date="2004" name="Nature">
        <title>Genome sequence of the Brown Norway rat yields insights into mammalian evolution.</title>
        <authorList>
            <person name="Gibbs R.A."/>
            <person name="Weinstock G.M."/>
            <person name="Metzker M.L."/>
            <person name="Muzny D.M."/>
            <person name="Sodergren E.J."/>
            <person name="Scherer S."/>
            <person name="Scott G."/>
            <person name="Steffen D."/>
            <person name="Worley K.C."/>
            <person name="Burch P.E."/>
            <person name="Okwuonu G."/>
            <person name="Hines S."/>
            <person name="Lewis L."/>
            <person name="Deramo C."/>
            <person name="Delgado O."/>
            <person name="Dugan-Rocha S."/>
            <person name="Miner G."/>
            <person name="Morgan M."/>
            <person name="Hawes A."/>
            <person name="Gill R."/>
            <person name="Holt R.A."/>
            <person name="Adams M.D."/>
            <person name="Amanatides P.G."/>
            <person name="Baden-Tillson H."/>
            <person name="Barnstead M."/>
            <person name="Chin S."/>
            <person name="Evans C.A."/>
            <person name="Ferriera S."/>
            <person name="Fosler C."/>
            <person name="Glodek A."/>
            <person name="Gu Z."/>
            <person name="Jennings D."/>
            <person name="Kraft C.L."/>
            <person name="Nguyen T."/>
            <person name="Pfannkoch C.M."/>
            <person name="Sitter C."/>
            <person name="Sutton G.G."/>
            <person name="Venter J.C."/>
            <person name="Woodage T."/>
            <person name="Smith D."/>
            <person name="Lee H.-M."/>
            <person name="Gustafson E."/>
            <person name="Cahill P."/>
            <person name="Kana A."/>
            <person name="Doucette-Stamm L."/>
            <person name="Weinstock K."/>
            <person name="Fechtel K."/>
            <person name="Weiss R.B."/>
            <person name="Dunn D.M."/>
            <person name="Green E.D."/>
            <person name="Blakesley R.W."/>
            <person name="Bouffard G.G."/>
            <person name="De Jong P.J."/>
            <person name="Osoegawa K."/>
            <person name="Zhu B."/>
            <person name="Marra M."/>
            <person name="Schein J."/>
            <person name="Bosdet I."/>
            <person name="Fjell C."/>
            <person name="Jones S."/>
            <person name="Krzywinski M."/>
            <person name="Mathewson C."/>
            <person name="Siddiqui A."/>
            <person name="Wye N."/>
            <person name="McPherson J."/>
            <person name="Zhao S."/>
            <person name="Fraser C.M."/>
            <person name="Shetty J."/>
            <person name="Shatsman S."/>
            <person name="Geer K."/>
            <person name="Chen Y."/>
            <person name="Abramzon S."/>
            <person name="Nierman W.C."/>
            <person name="Havlak P.H."/>
            <person name="Chen R."/>
            <person name="Durbin K.J."/>
            <person name="Egan A."/>
            <person name="Ren Y."/>
            <person name="Song X.-Z."/>
            <person name="Li B."/>
            <person name="Liu Y."/>
            <person name="Qin X."/>
            <person name="Cawley S."/>
            <person name="Cooney A.J."/>
            <person name="D'Souza L.M."/>
            <person name="Martin K."/>
            <person name="Wu J.Q."/>
            <person name="Gonzalez-Garay M.L."/>
            <person name="Jackson A.R."/>
            <person name="Kalafus K.J."/>
            <person name="McLeod M.P."/>
            <person name="Milosavljevic A."/>
            <person name="Virk D."/>
            <person name="Volkov A."/>
            <person name="Wheeler D.A."/>
            <person name="Zhang Z."/>
            <person name="Bailey J.A."/>
            <person name="Eichler E.E."/>
            <person name="Tuzun E."/>
            <person name="Birney E."/>
            <person name="Mongin E."/>
            <person name="Ureta-Vidal A."/>
            <person name="Woodwark C."/>
            <person name="Zdobnov E."/>
            <person name="Bork P."/>
            <person name="Suyama M."/>
            <person name="Torrents D."/>
            <person name="Alexandersson M."/>
            <person name="Trask B.J."/>
            <person name="Young J.M."/>
            <person name="Huang H."/>
            <person name="Wang H."/>
            <person name="Xing H."/>
            <person name="Daniels S."/>
            <person name="Gietzen D."/>
            <person name="Schmidt J."/>
            <person name="Stevens K."/>
            <person name="Vitt U."/>
            <person name="Wingrove J."/>
            <person name="Camara F."/>
            <person name="Mar Alba M."/>
            <person name="Abril J.F."/>
            <person name="Guigo R."/>
            <person name="Smit A."/>
            <person name="Dubchak I."/>
            <person name="Rubin E.M."/>
            <person name="Couronne O."/>
            <person name="Poliakov A."/>
            <person name="Huebner N."/>
            <person name="Ganten D."/>
            <person name="Goesele C."/>
            <person name="Hummel O."/>
            <person name="Kreitler T."/>
            <person name="Lee Y.-A."/>
            <person name="Monti J."/>
            <person name="Schulz H."/>
            <person name="Zimdahl H."/>
            <person name="Himmelbauer H."/>
            <person name="Lehrach H."/>
            <person name="Jacob H.J."/>
            <person name="Bromberg S."/>
            <person name="Gullings-Handley J."/>
            <person name="Jensen-Seaman M.I."/>
            <person name="Kwitek A.E."/>
            <person name="Lazar J."/>
            <person name="Pasko D."/>
            <person name="Tonellato P.J."/>
            <person name="Twigger S."/>
            <person name="Ponting C.P."/>
            <person name="Duarte J.M."/>
            <person name="Rice S."/>
            <person name="Goodstadt L."/>
            <person name="Beatson S.A."/>
            <person name="Emes R.D."/>
            <person name="Winter E.E."/>
            <person name="Webber C."/>
            <person name="Brandt P."/>
            <person name="Nyakatura G."/>
            <person name="Adetobi M."/>
            <person name="Chiaromonte F."/>
            <person name="Elnitski L."/>
            <person name="Eswara P."/>
            <person name="Hardison R.C."/>
            <person name="Hou M."/>
            <person name="Kolbe D."/>
            <person name="Makova K."/>
            <person name="Miller W."/>
            <person name="Nekrutenko A."/>
            <person name="Riemer C."/>
            <person name="Schwartz S."/>
            <person name="Taylor J."/>
            <person name="Yang S."/>
            <person name="Zhang Y."/>
            <person name="Lindpaintner K."/>
            <person name="Andrews T.D."/>
            <person name="Caccamo M."/>
            <person name="Clamp M."/>
            <person name="Clarke L."/>
            <person name="Curwen V."/>
            <person name="Durbin R.M."/>
            <person name="Eyras E."/>
            <person name="Searle S.M."/>
            <person name="Cooper G.M."/>
            <person name="Batzoglou S."/>
            <person name="Brudno M."/>
            <person name="Sidow A."/>
            <person name="Stone E.A."/>
            <person name="Payseur B.A."/>
            <person name="Bourque G."/>
            <person name="Lopez-Otin C."/>
            <person name="Puente X.S."/>
            <person name="Chakrabarti K."/>
            <person name="Chatterji S."/>
            <person name="Dewey C."/>
            <person name="Pachter L."/>
            <person name="Bray N."/>
            <person name="Yap V.B."/>
            <person name="Caspi A."/>
            <person name="Tesler G."/>
            <person name="Pevzner P.A."/>
            <person name="Haussler D."/>
            <person name="Roskin K.M."/>
            <person name="Baertsch R."/>
            <person name="Clawson H."/>
            <person name="Furey T.S."/>
            <person name="Hinrichs A.S."/>
            <person name="Karolchik D."/>
            <person name="Kent W.J."/>
            <person name="Rosenbloom K.R."/>
            <person name="Trumbower H."/>
            <person name="Weirauch M."/>
            <person name="Cooper D.N."/>
            <person name="Stenson P.D."/>
            <person name="Ma B."/>
            <person name="Brent M."/>
            <person name="Arumugam M."/>
            <person name="Shteynberg D."/>
            <person name="Copley R.R."/>
            <person name="Taylor M.S."/>
            <person name="Riethman H."/>
            <person name="Mudunuri U."/>
            <person name="Peterson J."/>
            <person name="Guyer M."/>
            <person name="Felsenfeld A."/>
            <person name="Old S."/>
            <person name="Mockrin S."/>
            <person name="Collins F.S."/>
        </authorList>
    </citation>
    <scope>NUCLEOTIDE SEQUENCE [LARGE SCALE GENOMIC DNA]</scope>
    <source>
        <strain>Brown Norway</strain>
    </source>
</reference>
<reference key="2">
    <citation type="journal article" date="2002" name="J. Biol. Chem.">
        <title>Identification of LBM180, a lamellar body limiting membrane protein of alveolar type II cells, as the ABC transporter protein ABCA3.</title>
        <authorList>
            <person name="Mulugeta S."/>
            <person name="Gray J.M."/>
            <person name="Notarfrancesco K.L."/>
            <person name="Gonzales L.W."/>
            <person name="Koval M."/>
            <person name="Feinstein S.I."/>
            <person name="Ballard P.L."/>
            <person name="Fisher A.B."/>
            <person name="Shuman H."/>
        </authorList>
    </citation>
    <scope>NUCLEOTIDE SEQUENCE [MRNA] OF 117-197</scope>
    <scope>IDENTIFICATION BY MASS SPECTROMETRY</scope>
    <scope>SUBCELLULAR LOCATION</scope>
    <scope>TISSUE SPECIFICITY</scope>
</reference>
<feature type="chain" id="PRO_0000452299" description="Phospholipid-transporting ATPase ABCA3">
    <location>
        <begin position="1"/>
        <end position="1704"/>
    </location>
</feature>
<feature type="chain" id="PRO_0000452300" description="150 Kda mature form" evidence="2">
    <location>
        <begin position="175"/>
        <end position="1704"/>
    </location>
</feature>
<feature type="transmembrane region" description="Helical" evidence="3">
    <location>
        <begin position="22"/>
        <end position="42"/>
    </location>
</feature>
<feature type="transmembrane region" description="Helical" evidence="3">
    <location>
        <begin position="251"/>
        <end position="271"/>
    </location>
</feature>
<feature type="transmembrane region" description="Helical" evidence="3">
    <location>
        <begin position="307"/>
        <end position="327"/>
    </location>
</feature>
<feature type="transmembrane region" description="Helical" evidence="3">
    <location>
        <begin position="344"/>
        <end position="364"/>
    </location>
</feature>
<feature type="transmembrane region" description="Helical" evidence="3">
    <location>
        <begin position="373"/>
        <end position="393"/>
    </location>
</feature>
<feature type="transmembrane region" description="Helical" evidence="3">
    <location>
        <begin position="405"/>
        <end position="425"/>
    </location>
</feature>
<feature type="transmembrane region" description="Helical" evidence="3">
    <location>
        <begin position="1100"/>
        <end position="1120"/>
    </location>
</feature>
<feature type="transmembrane region" description="Helical" evidence="3">
    <location>
        <begin position="1144"/>
        <end position="1164"/>
    </location>
</feature>
<feature type="transmembrane region" description="Helical" evidence="3">
    <location>
        <begin position="1183"/>
        <end position="1203"/>
    </location>
</feature>
<feature type="transmembrane region" description="Helical" evidence="3">
    <location>
        <begin position="1213"/>
        <end position="1233"/>
    </location>
</feature>
<feature type="transmembrane region" description="Helical" evidence="3">
    <location>
        <begin position="1245"/>
        <end position="1265"/>
    </location>
</feature>
<feature type="transmembrane region" description="Helical" evidence="3">
    <location>
        <begin position="1310"/>
        <end position="1330"/>
    </location>
</feature>
<feature type="domain" description="ABC transporter 1" evidence="4">
    <location>
        <begin position="530"/>
        <end position="763"/>
    </location>
</feature>
<feature type="domain" description="ABC transporter 2" evidence="4">
    <location>
        <begin position="1381"/>
        <end position="1614"/>
    </location>
</feature>
<feature type="binding site" evidence="4">
    <location>
        <begin position="566"/>
        <end position="573"/>
    </location>
    <ligand>
        <name>ATP</name>
        <dbReference type="ChEBI" id="CHEBI:30616"/>
    </ligand>
</feature>
<feature type="binding site" evidence="4">
    <location>
        <begin position="1416"/>
        <end position="1423"/>
    </location>
    <ligand>
        <name>ATP</name>
        <dbReference type="ChEBI" id="CHEBI:30616"/>
    </ligand>
</feature>
<feature type="site" description="Cleavage; by CTSL" evidence="2">
    <location>
        <begin position="174"/>
        <end position="175"/>
    </location>
</feature>
<feature type="glycosylation site" description="N-linked (GlcNAc...) asparagine" evidence="3">
    <location>
        <position position="14"/>
    </location>
</feature>
<feature type="glycosylation site" description="N-linked (GlcNAc...) asparagine" evidence="3">
    <location>
        <position position="53"/>
    </location>
</feature>
<feature type="glycosylation site" description="N-linked (GlcNAc...) asparagine" evidence="3">
    <location>
        <position position="124"/>
    </location>
</feature>
<feature type="glycosylation site" description="N-linked (GlcNAc...) asparagine" evidence="3">
    <location>
        <position position="140"/>
    </location>
</feature>
<feature type="glycosylation site" description="N-linked (GlcNAc...) asparagine" evidence="3">
    <location>
        <position position="228"/>
    </location>
</feature>
<feature type="glycosylation site" description="N-linked (GlcNAc...) asparagine" evidence="3">
    <location>
        <position position="620"/>
    </location>
</feature>
<feature type="glycosylation site" description="N-linked (GlcNAc...) asparagine" evidence="3">
    <location>
        <position position="945"/>
    </location>
</feature>
<feature type="glycosylation site" description="N-linked (GlcNAc...) asparagine" evidence="3">
    <location>
        <position position="1350"/>
    </location>
</feature>
<dbReference type="EC" id="7.6.2.1" evidence="2"/>
<dbReference type="EC" id="7.6.2.2" evidence="2"/>
<dbReference type="EMBL" id="AC098526">
    <property type="status" value="NOT_ANNOTATED_CDS"/>
    <property type="molecule type" value="Genomic_DNA"/>
</dbReference>
<dbReference type="EMBL" id="AC103090">
    <property type="status" value="NOT_ANNOTATED_CDS"/>
    <property type="molecule type" value="Genomic_DNA"/>
</dbReference>
<dbReference type="RefSeq" id="NP_001382963.1">
    <property type="nucleotide sequence ID" value="NM_001396034.1"/>
</dbReference>
<dbReference type="RefSeq" id="XP_001054650.1">
    <property type="nucleotide sequence ID" value="XM_001054650.6"/>
</dbReference>
<dbReference type="RefSeq" id="XP_006220652.1">
    <property type="nucleotide sequence ID" value="XM_006220590.3"/>
</dbReference>
<dbReference type="RefSeq" id="XP_006246101.1">
    <property type="nucleotide sequence ID" value="XM_006246039.5"/>
</dbReference>
<dbReference type="RefSeq" id="XP_038943008.1">
    <property type="nucleotide sequence ID" value="XM_039087080.2"/>
</dbReference>
<dbReference type="RefSeq" id="XP_063124987.1">
    <property type="nucleotide sequence ID" value="XM_063268917.1"/>
</dbReference>
<dbReference type="RefSeq" id="XP_220219.6">
    <property type="nucleotide sequence ID" value="XM_220219.10"/>
</dbReference>
<dbReference type="SMR" id="A0A0G2K1Q8"/>
<dbReference type="FunCoup" id="A0A0G2K1Q8">
    <property type="interactions" value="877"/>
</dbReference>
<dbReference type="STRING" id="10116.ENSRNOP00000071944"/>
<dbReference type="GlyCosmos" id="A0A0G2K1Q8">
    <property type="glycosylation" value="8 sites, No reported glycans"/>
</dbReference>
<dbReference type="GlyGen" id="A0A0G2K1Q8">
    <property type="glycosylation" value="9 sites"/>
</dbReference>
<dbReference type="iPTMnet" id="A0A0G2K1Q8"/>
<dbReference type="PhosphoSitePlus" id="A0A0G2K1Q8"/>
<dbReference type="jPOST" id="A0A0G2K1Q8"/>
<dbReference type="Ensembl" id="ENSRNOT00000079700.2">
    <property type="protein sequence ID" value="ENSRNOP00000071944.1"/>
    <property type="gene ID" value="ENSRNOG00000050057.3"/>
</dbReference>
<dbReference type="GeneID" id="302973"/>
<dbReference type="AGR" id="RGD:1307174"/>
<dbReference type="CTD" id="21"/>
<dbReference type="RGD" id="1307174">
    <property type="gene designation" value="Abca3"/>
</dbReference>
<dbReference type="GeneTree" id="ENSGT00940000155289"/>
<dbReference type="InParanoid" id="A0A0G2K1Q8"/>
<dbReference type="OMA" id="WKNWIVL"/>
<dbReference type="Reactome" id="R-RNO-1369062">
    <property type="pathway name" value="ABC transporters in lipid homeostasis"/>
</dbReference>
<dbReference type="Reactome" id="R-RNO-5683826">
    <property type="pathway name" value="Surfactant metabolism"/>
</dbReference>
<dbReference type="PRO" id="PR:A0A0G2K1Q8"/>
<dbReference type="Proteomes" id="UP000002494">
    <property type="component" value="Chromosome 10"/>
</dbReference>
<dbReference type="Bgee" id="ENSRNOG00000050057">
    <property type="expression patterns" value="Expressed in lung and 18 other cell types or tissues"/>
</dbReference>
<dbReference type="ExpressionAtlas" id="A0A0G2K1Q8">
    <property type="expression patterns" value="baseline and differential"/>
</dbReference>
<dbReference type="GO" id="GO:0097208">
    <property type="term" value="C:alveolar lamellar body"/>
    <property type="evidence" value="ECO:0000266"/>
    <property type="project" value="RGD"/>
</dbReference>
<dbReference type="GO" id="GO:0097233">
    <property type="term" value="C:alveolar lamellar body membrane"/>
    <property type="evidence" value="ECO:0000314"/>
    <property type="project" value="RGD"/>
</dbReference>
<dbReference type="GO" id="GO:0030659">
    <property type="term" value="C:cytoplasmic vesicle membrane"/>
    <property type="evidence" value="ECO:0000266"/>
    <property type="project" value="RGD"/>
</dbReference>
<dbReference type="GO" id="GO:0043231">
    <property type="term" value="C:intracellular membrane-bounded organelle"/>
    <property type="evidence" value="ECO:0000318"/>
    <property type="project" value="GO_Central"/>
</dbReference>
<dbReference type="GO" id="GO:0042599">
    <property type="term" value="C:lamellar body"/>
    <property type="evidence" value="ECO:0000266"/>
    <property type="project" value="RGD"/>
</dbReference>
<dbReference type="GO" id="GO:0097232">
    <property type="term" value="C:lamellar body membrane"/>
    <property type="evidence" value="ECO:0000266"/>
    <property type="project" value="RGD"/>
</dbReference>
<dbReference type="GO" id="GO:0005770">
    <property type="term" value="C:late endosome"/>
    <property type="evidence" value="ECO:0000250"/>
    <property type="project" value="UniProtKB"/>
</dbReference>
<dbReference type="GO" id="GO:0005765">
    <property type="term" value="C:lysosomal membrane"/>
    <property type="evidence" value="ECO:0007669"/>
    <property type="project" value="UniProtKB-SubCell"/>
</dbReference>
<dbReference type="GO" id="GO:0032585">
    <property type="term" value="C:multivesicular body membrane"/>
    <property type="evidence" value="ECO:0007669"/>
    <property type="project" value="UniProtKB-SubCell"/>
</dbReference>
<dbReference type="GO" id="GO:0005886">
    <property type="term" value="C:plasma membrane"/>
    <property type="evidence" value="ECO:0000266"/>
    <property type="project" value="RGD"/>
</dbReference>
<dbReference type="GO" id="GO:0008559">
    <property type="term" value="F:ABC-type xenobiotic transporter activity"/>
    <property type="evidence" value="ECO:0000250"/>
    <property type="project" value="UniProtKB"/>
</dbReference>
<dbReference type="GO" id="GO:0005524">
    <property type="term" value="F:ATP binding"/>
    <property type="evidence" value="ECO:0007669"/>
    <property type="project" value="UniProtKB-KW"/>
</dbReference>
<dbReference type="GO" id="GO:0016887">
    <property type="term" value="F:ATP hydrolysis activity"/>
    <property type="evidence" value="ECO:0000250"/>
    <property type="project" value="UniProtKB"/>
</dbReference>
<dbReference type="GO" id="GO:0042626">
    <property type="term" value="F:ATPase-coupled transmembrane transporter activity"/>
    <property type="evidence" value="ECO:0000318"/>
    <property type="project" value="GO_Central"/>
</dbReference>
<dbReference type="GO" id="GO:0005319">
    <property type="term" value="F:lipid transporter activity"/>
    <property type="evidence" value="ECO:0000318"/>
    <property type="project" value="GO_Central"/>
</dbReference>
<dbReference type="GO" id="GO:0140345">
    <property type="term" value="F:phosphatidylcholine flippase activity"/>
    <property type="evidence" value="ECO:0000250"/>
    <property type="project" value="UniProtKB"/>
</dbReference>
<dbReference type="GO" id="GO:0120019">
    <property type="term" value="F:phosphatidylcholine transfer activity"/>
    <property type="evidence" value="ECO:0000250"/>
    <property type="project" value="UniProtKB"/>
</dbReference>
<dbReference type="GO" id="GO:0006869">
    <property type="term" value="P:lipid transport"/>
    <property type="evidence" value="ECO:0000318"/>
    <property type="project" value="GO_Central"/>
</dbReference>
<dbReference type="GO" id="GO:0030324">
    <property type="term" value="P:lung development"/>
    <property type="evidence" value="ECO:0000250"/>
    <property type="project" value="UniProtKB"/>
</dbReference>
<dbReference type="GO" id="GO:0070925">
    <property type="term" value="P:organelle assembly"/>
    <property type="evidence" value="ECO:0000266"/>
    <property type="project" value="RGD"/>
</dbReference>
<dbReference type="GO" id="GO:0046470">
    <property type="term" value="P:phosphatidylcholine metabolic process"/>
    <property type="evidence" value="ECO:0000250"/>
    <property type="project" value="UniProtKB"/>
</dbReference>
<dbReference type="GO" id="GO:0046471">
    <property type="term" value="P:phosphatidylglycerol metabolic process"/>
    <property type="evidence" value="ECO:0000266"/>
    <property type="project" value="RGD"/>
</dbReference>
<dbReference type="GO" id="GO:0055091">
    <property type="term" value="P:phospholipid homeostasis"/>
    <property type="evidence" value="ECO:0000266"/>
    <property type="project" value="RGD"/>
</dbReference>
<dbReference type="GO" id="GO:0015914">
    <property type="term" value="P:phospholipid transport"/>
    <property type="evidence" value="ECO:0000250"/>
    <property type="project" value="UniProtKB"/>
</dbReference>
<dbReference type="GO" id="GO:0010875">
    <property type="term" value="P:positive regulation of cholesterol efflux"/>
    <property type="evidence" value="ECO:0000250"/>
    <property type="project" value="UniProtKB"/>
</dbReference>
<dbReference type="GO" id="GO:1902995">
    <property type="term" value="P:positive regulation of phospholipid efflux"/>
    <property type="evidence" value="ECO:0000250"/>
    <property type="project" value="UniProtKB"/>
</dbReference>
<dbReference type="GO" id="GO:2001140">
    <property type="term" value="P:positive regulation of phospholipid transport"/>
    <property type="evidence" value="ECO:0000250"/>
    <property type="project" value="UniProtKB"/>
</dbReference>
<dbReference type="GO" id="GO:0032464">
    <property type="term" value="P:positive regulation of protein homooligomerization"/>
    <property type="evidence" value="ECO:0000266"/>
    <property type="project" value="RGD"/>
</dbReference>
<dbReference type="GO" id="GO:0046890">
    <property type="term" value="P:regulation of lipid biosynthetic process"/>
    <property type="evidence" value="ECO:0000266"/>
    <property type="project" value="RGD"/>
</dbReference>
<dbReference type="GO" id="GO:0032368">
    <property type="term" value="P:regulation of lipid transport"/>
    <property type="evidence" value="ECO:0000266"/>
    <property type="project" value="RGD"/>
</dbReference>
<dbReference type="GO" id="GO:0150172">
    <property type="term" value="P:regulation of phosphatidylcholine metabolic process"/>
    <property type="evidence" value="ECO:0000250"/>
    <property type="project" value="UniProtKB"/>
</dbReference>
<dbReference type="GO" id="GO:0051384">
    <property type="term" value="P:response to glucocorticoid"/>
    <property type="evidence" value="ECO:0000270"/>
    <property type="project" value="RGD"/>
</dbReference>
<dbReference type="GO" id="GO:0043129">
    <property type="term" value="P:surfactant homeostasis"/>
    <property type="evidence" value="ECO:0000266"/>
    <property type="project" value="RGD"/>
</dbReference>
<dbReference type="GO" id="GO:0046618">
    <property type="term" value="P:xenobiotic export from cell"/>
    <property type="evidence" value="ECO:0000250"/>
    <property type="project" value="UniProtKB"/>
</dbReference>
<dbReference type="GO" id="GO:0006855">
    <property type="term" value="P:xenobiotic transmembrane transport"/>
    <property type="evidence" value="ECO:0000250"/>
    <property type="project" value="UniProtKB"/>
</dbReference>
<dbReference type="GO" id="GO:0042908">
    <property type="term" value="P:xenobiotic transport"/>
    <property type="evidence" value="ECO:0000250"/>
    <property type="project" value="UniProtKB"/>
</dbReference>
<dbReference type="CDD" id="cd03263">
    <property type="entry name" value="ABC_subfamily_A"/>
    <property type="match status" value="2"/>
</dbReference>
<dbReference type="FunFam" id="3.40.50.300:FF:000327">
    <property type="entry name" value="ATP-binding cassette sub-family A member 3"/>
    <property type="match status" value="1"/>
</dbReference>
<dbReference type="FunFam" id="3.40.50.300:FF:000465">
    <property type="entry name" value="ATP-binding cassette, sub-family A (ABC1), member 3"/>
    <property type="match status" value="1"/>
</dbReference>
<dbReference type="Gene3D" id="3.40.50.300">
    <property type="entry name" value="P-loop containing nucleotide triphosphate hydrolases"/>
    <property type="match status" value="2"/>
</dbReference>
<dbReference type="InterPro" id="IPR003593">
    <property type="entry name" value="AAA+_ATPase"/>
</dbReference>
<dbReference type="InterPro" id="IPR013525">
    <property type="entry name" value="ABC2_TM"/>
</dbReference>
<dbReference type="InterPro" id="IPR003439">
    <property type="entry name" value="ABC_transporter-like_ATP-bd"/>
</dbReference>
<dbReference type="InterPro" id="IPR017871">
    <property type="entry name" value="ABC_transporter-like_CS"/>
</dbReference>
<dbReference type="InterPro" id="IPR026082">
    <property type="entry name" value="ABCA"/>
</dbReference>
<dbReference type="InterPro" id="IPR027417">
    <property type="entry name" value="P-loop_NTPase"/>
</dbReference>
<dbReference type="InterPro" id="IPR056264">
    <property type="entry name" value="R2_ABCA1-4-like"/>
</dbReference>
<dbReference type="PANTHER" id="PTHR19229:SF250">
    <property type="entry name" value="ABC TRANSPORTER DOMAIN-CONTAINING PROTEIN-RELATED"/>
    <property type="match status" value="1"/>
</dbReference>
<dbReference type="PANTHER" id="PTHR19229">
    <property type="entry name" value="ATP-BINDING CASSETTE TRANSPORTER SUBFAMILY A ABCA"/>
    <property type="match status" value="1"/>
</dbReference>
<dbReference type="Pfam" id="PF12698">
    <property type="entry name" value="ABC2_membrane_3"/>
    <property type="match status" value="2"/>
</dbReference>
<dbReference type="Pfam" id="PF00005">
    <property type="entry name" value="ABC_tran"/>
    <property type="match status" value="2"/>
</dbReference>
<dbReference type="Pfam" id="PF23321">
    <property type="entry name" value="R1_ABCA1"/>
    <property type="match status" value="1"/>
</dbReference>
<dbReference type="SMART" id="SM00382">
    <property type="entry name" value="AAA"/>
    <property type="match status" value="2"/>
</dbReference>
<dbReference type="SUPFAM" id="SSF52540">
    <property type="entry name" value="P-loop containing nucleoside triphosphate hydrolases"/>
    <property type="match status" value="2"/>
</dbReference>
<dbReference type="PROSITE" id="PS00211">
    <property type="entry name" value="ABC_TRANSPORTER_1"/>
    <property type="match status" value="1"/>
</dbReference>
<dbReference type="PROSITE" id="PS50893">
    <property type="entry name" value="ABC_TRANSPORTER_2"/>
    <property type="match status" value="2"/>
</dbReference>
<sequence length="1704" mass="191767">MVVLRQLRLLLWKNYTLKKRKVLVTVLELFLPLLFSGILIWLRLKIQSENVPNATVYPDQHIQELPLFFSFPPPGGSWELAYVPSHSDAARTITEAVRREFMIKMRVHGFSSEKDFEDYVRYDNHSSNVLAAVVFEHTFNHSKDPLPLAVRYHLRFSYTRRNYMWTQTGNLFLKETEGWHTASLFPLFPSPGPREPSSPDGGEPGYIREGFLAVQHAVDKAIMHYHANASAHQLFQKLTVITKRFPFPPYISDPFLIAIQYQLPLLLMLSFTYTSLTIIRAVVQEKEKKLKEYMRMMGLSSWLHWSAWFLMFLLFSLIVVSFMTLLFCVKVKKDIAVLSNSDPSLVLAFLLCFAISSISFSFMVSTFFSKANMAATVGGFLYFFTYTPYFFVAPRYNWMTLSQKLLSCLLSNVAMAMGAQLIGKFEAKGTGIQWCDLLNPVNVDDDFCFGQVLGMLLLDSVLYGLVTWYVEAVFPGQFGVPQPWYFFLMPSYWCGNPRTVVGKEEEGGDPEKAFRTEYFEAEPEDLAAGIKIKHLSKVFQVGNKDKMGIRDLTLNLYEGQITVLLGHNGAGKTTTMSMLTGLFPPTSGHAYIRGYEISQDMVQIRKSLGLCPQHDVLFDNLTVAEHLYFYAQLKGLSVQKCPEEVKQMLHTLGLEDKRDSRSKFLSGGMKRKLAIGIALIAGSKVLMLDEPTSGMDAVSRRAIWDLLQQQKSDRTVLLTTHFMDEADLLGDRIAILAKGELQCCGSSLFLKQKYGAGYHMTLVKEPHCNPEGISQLVHHHVPNAMLESHAGAELSFILPKESTHRFESLFAKLEKKQKELGIASFGASVTTMEEVFLRVGKLVDTSMDIQAIQLPALQYQHERRASDWALDSNLCGVMDPTNGIGALIEEEEVLVKLNTGLALHCQQFWAMFLKKAAYSWREWRMVAAQILVPVTCLTLALLAINYTSEIFDDPPLKLSLNEYGTTVVPFSVPGTSRLGQQLSEHLRDMLQAERQEPREVLGDLEEFLVFRASVEGGGFNERCLVATSFKDSGERTVVTALFNNQAYHSPATALAIVDNLLFKLLCGPRASIEISNYPQPRSTLQVAKDQFNEGRKGFDIALNLLIAMAFLASTFSILAVSERAVQAKHVQFVSGVHVATFWLSALLWDLISFLVPSLLLLVVFRAFDVHAFTRDGHMADLLLLLMLYGWAIIPLMYLLSFFFSAASTAYTRLTIFNILSGIATFIVVTIMRIPAVKLEELSRTLDHVFLVLPNHCLGMAVSNFYENYETRRYCTSSEVATHYCKKYNIQYQENFYAWSTPGIGKFVTSMAASGGIYLTLLFLIETNLLWRLRTFVCAFRRRWTLAELQNRTSVLPEDQDVADERSRVLVPSLDSMLDTPLIINELSKVYDQRAPLLAVDRISLAVQKGECFGLLGFNGAGKTTTFKMLTGEETITSGDAFVGGYSISSDIGKVRQRMGYCPQFDALLDHMTGREMLVMYARLRGIPERLIDACVENTLRGLLLEPHANKLVKTYSGGNKRKLSTGIALIGEPAVIFLDEPSTGMDPVARRLLWDTVARARESGKAIVITSHSMEECEALCTRLAIMVQGQFKCLGSPQHLKSKFGSGYSLQAKVRSEGKQEVLEEFKAFVDLTFPGSVLEDEHQDMVHYHLPGCDLSWAKVFGILEKAKEKYGVDDYSVSQISLEQVFLSFAHLQPPTTEDGR</sequence>